<dbReference type="EMBL" id="AM039952">
    <property type="protein sequence ID" value="CAJ21837.1"/>
    <property type="molecule type" value="Genomic_DNA"/>
</dbReference>
<dbReference type="RefSeq" id="WP_003488515.1">
    <property type="nucleotide sequence ID" value="NZ_CP017190.1"/>
</dbReference>
<dbReference type="SMR" id="Q3BZ76"/>
<dbReference type="STRING" id="456327.BJD11_21900"/>
<dbReference type="GeneID" id="97508599"/>
<dbReference type="KEGG" id="xcv:XCV0206"/>
<dbReference type="eggNOG" id="COG1952">
    <property type="taxonomic scope" value="Bacteria"/>
</dbReference>
<dbReference type="HOGENOM" id="CLU_111574_1_0_6"/>
<dbReference type="Proteomes" id="UP000007069">
    <property type="component" value="Chromosome"/>
</dbReference>
<dbReference type="GO" id="GO:0005737">
    <property type="term" value="C:cytoplasm"/>
    <property type="evidence" value="ECO:0007669"/>
    <property type="project" value="UniProtKB-SubCell"/>
</dbReference>
<dbReference type="GO" id="GO:0051082">
    <property type="term" value="F:unfolded protein binding"/>
    <property type="evidence" value="ECO:0007669"/>
    <property type="project" value="InterPro"/>
</dbReference>
<dbReference type="GO" id="GO:0006457">
    <property type="term" value="P:protein folding"/>
    <property type="evidence" value="ECO:0007669"/>
    <property type="project" value="UniProtKB-UniRule"/>
</dbReference>
<dbReference type="GO" id="GO:0051262">
    <property type="term" value="P:protein tetramerization"/>
    <property type="evidence" value="ECO:0007669"/>
    <property type="project" value="InterPro"/>
</dbReference>
<dbReference type="GO" id="GO:0015031">
    <property type="term" value="P:protein transport"/>
    <property type="evidence" value="ECO:0007669"/>
    <property type="project" value="UniProtKB-UniRule"/>
</dbReference>
<dbReference type="Gene3D" id="3.10.420.10">
    <property type="entry name" value="SecB-like"/>
    <property type="match status" value="1"/>
</dbReference>
<dbReference type="HAMAP" id="MF_00821">
    <property type="entry name" value="SecB"/>
    <property type="match status" value="1"/>
</dbReference>
<dbReference type="InterPro" id="IPR003708">
    <property type="entry name" value="SecB"/>
</dbReference>
<dbReference type="InterPro" id="IPR035958">
    <property type="entry name" value="SecB-like_sf"/>
</dbReference>
<dbReference type="NCBIfam" id="NF004391">
    <property type="entry name" value="PRK05751.1-2"/>
    <property type="match status" value="1"/>
</dbReference>
<dbReference type="NCBIfam" id="NF004393">
    <property type="entry name" value="PRK05751.1-4"/>
    <property type="match status" value="1"/>
</dbReference>
<dbReference type="NCBIfam" id="TIGR00809">
    <property type="entry name" value="secB"/>
    <property type="match status" value="1"/>
</dbReference>
<dbReference type="PANTHER" id="PTHR36918">
    <property type="match status" value="1"/>
</dbReference>
<dbReference type="PANTHER" id="PTHR36918:SF1">
    <property type="entry name" value="PROTEIN-EXPORT PROTEIN SECB"/>
    <property type="match status" value="1"/>
</dbReference>
<dbReference type="Pfam" id="PF02556">
    <property type="entry name" value="SecB"/>
    <property type="match status" value="1"/>
</dbReference>
<dbReference type="PRINTS" id="PR01594">
    <property type="entry name" value="SECBCHAPRONE"/>
</dbReference>
<dbReference type="SUPFAM" id="SSF54611">
    <property type="entry name" value="SecB-like"/>
    <property type="match status" value="1"/>
</dbReference>
<comment type="function">
    <text evidence="1">One of the proteins required for the normal export of preproteins out of the cell cytoplasm. It is a molecular chaperone that binds to a subset of precursor proteins, maintaining them in a translocation-competent state. It also specifically binds to its receptor SecA.</text>
</comment>
<comment type="subunit">
    <text evidence="1">Homotetramer, a dimer of dimers. One homotetramer interacts with 1 SecA dimer.</text>
</comment>
<comment type="subcellular location">
    <subcellularLocation>
        <location evidence="1">Cytoplasm</location>
    </subcellularLocation>
</comment>
<comment type="similarity">
    <text evidence="1">Belongs to the SecB family.</text>
</comment>
<accession>Q3BZ76</accession>
<proteinExistence type="inferred from homology"/>
<feature type="chain" id="PRO_0000318271" description="Protein-export protein SecB">
    <location>
        <begin position="1"/>
        <end position="170"/>
    </location>
</feature>
<protein>
    <recommendedName>
        <fullName evidence="1">Protein-export protein SecB</fullName>
    </recommendedName>
</protein>
<reference key="1">
    <citation type="journal article" date="2005" name="J. Bacteriol.">
        <title>Insights into genome plasticity and pathogenicity of the plant pathogenic Bacterium Xanthomonas campestris pv. vesicatoria revealed by the complete genome sequence.</title>
        <authorList>
            <person name="Thieme F."/>
            <person name="Koebnik R."/>
            <person name="Bekel T."/>
            <person name="Berger C."/>
            <person name="Boch J."/>
            <person name="Buettner D."/>
            <person name="Caldana C."/>
            <person name="Gaigalat L."/>
            <person name="Goesmann A."/>
            <person name="Kay S."/>
            <person name="Kirchner O."/>
            <person name="Lanz C."/>
            <person name="Linke B."/>
            <person name="McHardy A.C."/>
            <person name="Meyer F."/>
            <person name="Mittenhuber G."/>
            <person name="Nies D.H."/>
            <person name="Niesbach-Kloesgen U."/>
            <person name="Patschkowski T."/>
            <person name="Rueckert C."/>
            <person name="Rupp O."/>
            <person name="Schneiker S."/>
            <person name="Schuster S.C."/>
            <person name="Vorhoelter F.J."/>
            <person name="Weber E."/>
            <person name="Puehler A."/>
            <person name="Bonas U."/>
            <person name="Bartels D."/>
            <person name="Kaiser O."/>
        </authorList>
    </citation>
    <scope>NUCLEOTIDE SEQUENCE [LARGE SCALE GENOMIC DNA]</scope>
    <source>
        <strain>85-10</strain>
    </source>
</reference>
<gene>
    <name evidence="1" type="primary">secB</name>
    <name type="ordered locus">XCV0206</name>
</gene>
<name>SECB_XANE5</name>
<keyword id="KW-0143">Chaperone</keyword>
<keyword id="KW-0963">Cytoplasm</keyword>
<keyword id="KW-0653">Protein transport</keyword>
<keyword id="KW-0811">Translocation</keyword>
<keyword id="KW-0813">Transport</keyword>
<sequence>MSDEILNGAAAPADAAAGPAFTIEKIYVKDVSFESPNAPAVFNDANQPELQLNLNQKVQRLNDNAFEVVLAVTLTCTAGGKTAYVAEVQQAGVFGLVGLDPQAIDVLLGTQCPNILFPYVRTLVSDLIQAGGFPPFYLQPINFEALYAETLRQRQNEGTSLADSEPAGNA</sequence>
<evidence type="ECO:0000255" key="1">
    <source>
        <dbReference type="HAMAP-Rule" id="MF_00821"/>
    </source>
</evidence>
<organism>
    <name type="scientific">Xanthomonas euvesicatoria pv. vesicatoria (strain 85-10)</name>
    <name type="common">Xanthomonas campestris pv. vesicatoria</name>
    <dbReference type="NCBI Taxonomy" id="316273"/>
    <lineage>
        <taxon>Bacteria</taxon>
        <taxon>Pseudomonadati</taxon>
        <taxon>Pseudomonadota</taxon>
        <taxon>Gammaproteobacteria</taxon>
        <taxon>Lysobacterales</taxon>
        <taxon>Lysobacteraceae</taxon>
        <taxon>Xanthomonas</taxon>
    </lineage>
</organism>